<dbReference type="EC" id="3.5.4.16" evidence="1"/>
<dbReference type="EMBL" id="CP000615">
    <property type="protein sequence ID" value="ABO57238.1"/>
    <property type="molecule type" value="Genomic_DNA"/>
</dbReference>
<dbReference type="SMR" id="A4JLT5"/>
<dbReference type="KEGG" id="bvi:Bcep1808_4258"/>
<dbReference type="eggNOG" id="COG1469">
    <property type="taxonomic scope" value="Bacteria"/>
</dbReference>
<dbReference type="HOGENOM" id="CLU_062816_1_1_4"/>
<dbReference type="UniPathway" id="UPA00848">
    <property type="reaction ID" value="UER00151"/>
</dbReference>
<dbReference type="Proteomes" id="UP000002287">
    <property type="component" value="Chromosome 2"/>
</dbReference>
<dbReference type="GO" id="GO:0003934">
    <property type="term" value="F:GTP cyclohydrolase I activity"/>
    <property type="evidence" value="ECO:0007669"/>
    <property type="project" value="UniProtKB-UniRule"/>
</dbReference>
<dbReference type="GO" id="GO:0046654">
    <property type="term" value="P:tetrahydrofolate biosynthetic process"/>
    <property type="evidence" value="ECO:0007669"/>
    <property type="project" value="UniProtKB-UniRule"/>
</dbReference>
<dbReference type="Gene3D" id="3.10.270.10">
    <property type="entry name" value="Urate Oxidase"/>
    <property type="match status" value="1"/>
</dbReference>
<dbReference type="HAMAP" id="MF_01527_B">
    <property type="entry name" value="GTP_cyclohydrol_B"/>
    <property type="match status" value="1"/>
</dbReference>
<dbReference type="InterPro" id="IPR022838">
    <property type="entry name" value="GTP_cyclohydrolase_FolE2"/>
</dbReference>
<dbReference type="InterPro" id="IPR003801">
    <property type="entry name" value="GTP_cyclohydrolase_FolE2/MptA"/>
</dbReference>
<dbReference type="NCBIfam" id="NF010200">
    <property type="entry name" value="PRK13674.1-1"/>
    <property type="match status" value="1"/>
</dbReference>
<dbReference type="PANTHER" id="PTHR36445">
    <property type="entry name" value="GTP CYCLOHYDROLASE MPTA"/>
    <property type="match status" value="1"/>
</dbReference>
<dbReference type="PANTHER" id="PTHR36445:SF1">
    <property type="entry name" value="GTP CYCLOHYDROLASE MPTA"/>
    <property type="match status" value="1"/>
</dbReference>
<dbReference type="Pfam" id="PF02649">
    <property type="entry name" value="GCHY-1"/>
    <property type="match status" value="1"/>
</dbReference>
<feature type="chain" id="PRO_1000068663" description="GTP cyclohydrolase FolE2">
    <location>
        <begin position="1"/>
        <end position="269"/>
    </location>
</feature>
<feature type="site" description="May be catalytically important" evidence="1">
    <location>
        <position position="154"/>
    </location>
</feature>
<accession>A4JLT5</accession>
<evidence type="ECO:0000255" key="1">
    <source>
        <dbReference type="HAMAP-Rule" id="MF_01527"/>
    </source>
</evidence>
<keyword id="KW-0378">Hydrolase</keyword>
<protein>
    <recommendedName>
        <fullName evidence="1">GTP cyclohydrolase FolE2</fullName>
        <ecNumber evidence="1">3.5.4.16</ecNumber>
    </recommendedName>
</protein>
<name>GCH4_BURVG</name>
<sequence>MNQMNPAFVMPDVQSTVDTRQIPIQRVGVKAVRHPLTVCTESGDVQPSVGVWNLDVRLPADQKGTHMSRFVALLEENRAPLTVERFRAMLASMLEKLEAQAGRIEVTFPYFVNKTAPVSGVQSLLDYEVTLAGESRDGHTRVFLKVLVPVTSLCPCSKKISQYGAHNQRSHVTIDAELAGDLPVEALIRIAEEEASCELWGLLKRPDEKFVTERAYENPKFVEDLVRDVAQRLDADERVIAYVLEAENFESIHNHSAYALIERDKRLAA</sequence>
<organism>
    <name type="scientific">Burkholderia vietnamiensis (strain G4 / LMG 22486)</name>
    <name type="common">Burkholderia cepacia (strain R1808)</name>
    <dbReference type="NCBI Taxonomy" id="269482"/>
    <lineage>
        <taxon>Bacteria</taxon>
        <taxon>Pseudomonadati</taxon>
        <taxon>Pseudomonadota</taxon>
        <taxon>Betaproteobacteria</taxon>
        <taxon>Burkholderiales</taxon>
        <taxon>Burkholderiaceae</taxon>
        <taxon>Burkholderia</taxon>
        <taxon>Burkholderia cepacia complex</taxon>
    </lineage>
</organism>
<gene>
    <name evidence="1" type="primary">folE2</name>
    <name type="ordered locus">Bcep1808_4258</name>
</gene>
<proteinExistence type="inferred from homology"/>
<comment type="function">
    <text evidence="1">Converts GTP to 7,8-dihydroneopterin triphosphate.</text>
</comment>
<comment type="catalytic activity">
    <reaction evidence="1">
        <text>GTP + H2O = 7,8-dihydroneopterin 3'-triphosphate + formate + H(+)</text>
        <dbReference type="Rhea" id="RHEA:17473"/>
        <dbReference type="ChEBI" id="CHEBI:15377"/>
        <dbReference type="ChEBI" id="CHEBI:15378"/>
        <dbReference type="ChEBI" id="CHEBI:15740"/>
        <dbReference type="ChEBI" id="CHEBI:37565"/>
        <dbReference type="ChEBI" id="CHEBI:58462"/>
        <dbReference type="EC" id="3.5.4.16"/>
    </reaction>
</comment>
<comment type="pathway">
    <text evidence="1">Cofactor biosynthesis; 7,8-dihydroneopterin triphosphate biosynthesis; 7,8-dihydroneopterin triphosphate from GTP: step 1/1.</text>
</comment>
<comment type="similarity">
    <text evidence="1">Belongs to the GTP cyclohydrolase IV family.</text>
</comment>
<reference key="1">
    <citation type="submission" date="2007-03" db="EMBL/GenBank/DDBJ databases">
        <title>Complete sequence of chromosome 2 of Burkholderia vietnamiensis G4.</title>
        <authorList>
            <consortium name="US DOE Joint Genome Institute"/>
            <person name="Copeland A."/>
            <person name="Lucas S."/>
            <person name="Lapidus A."/>
            <person name="Barry K."/>
            <person name="Detter J.C."/>
            <person name="Glavina del Rio T."/>
            <person name="Hammon N."/>
            <person name="Israni S."/>
            <person name="Dalin E."/>
            <person name="Tice H."/>
            <person name="Pitluck S."/>
            <person name="Chain P."/>
            <person name="Malfatti S."/>
            <person name="Shin M."/>
            <person name="Vergez L."/>
            <person name="Schmutz J."/>
            <person name="Larimer F."/>
            <person name="Land M."/>
            <person name="Hauser L."/>
            <person name="Kyrpides N."/>
            <person name="Tiedje J."/>
            <person name="Richardson P."/>
        </authorList>
    </citation>
    <scope>NUCLEOTIDE SEQUENCE [LARGE SCALE GENOMIC DNA]</scope>
    <source>
        <strain>G4 / LMG 22486</strain>
    </source>
</reference>